<gene>
    <name type="ORF">SPAC806.04c</name>
</gene>
<proteinExistence type="evidence at protein level"/>
<accession>Q9UT55</accession>
<protein>
    <recommendedName>
        <fullName evidence="1">Damage-control phosphatase SPAC806.04c</fullName>
        <ecNumber evidence="1">3.1.3.-</ecNumber>
    </recommendedName>
    <alternativeName>
        <fullName evidence="1">Sugar phosphate phosphatase SPAC806.04c</fullName>
    </alternativeName>
</protein>
<organism>
    <name type="scientific">Schizosaccharomyces pombe (strain 972 / ATCC 24843)</name>
    <name type="common">Fission yeast</name>
    <dbReference type="NCBI Taxonomy" id="284812"/>
    <lineage>
        <taxon>Eukaryota</taxon>
        <taxon>Fungi</taxon>
        <taxon>Dikarya</taxon>
        <taxon>Ascomycota</taxon>
        <taxon>Taphrinomycotina</taxon>
        <taxon>Schizosaccharomycetes</taxon>
        <taxon>Schizosaccharomycetales</taxon>
        <taxon>Schizosaccharomycetaceae</taxon>
        <taxon>Schizosaccharomyces</taxon>
    </lineage>
</organism>
<evidence type="ECO:0000250" key="1">
    <source>
        <dbReference type="UniProtKB" id="Q04371"/>
    </source>
</evidence>
<evidence type="ECO:0000269" key="2">
    <source>
    </source>
</evidence>
<evidence type="ECO:0000305" key="3"/>
<evidence type="ECO:0007829" key="4">
    <source>
        <dbReference type="PDB" id="7T7K"/>
    </source>
</evidence>
<evidence type="ECO:0007829" key="5">
    <source>
        <dbReference type="PDB" id="7U1Y"/>
    </source>
</evidence>
<feature type="chain" id="PRO_0000230801" description="Damage-control phosphatase SPAC806.04c">
    <location>
        <begin position="1"/>
        <end position="438"/>
    </location>
</feature>
<feature type="short sequence motif" description="Subfamily III RTxK motif" evidence="1">
    <location>
        <begin position="398"/>
        <end position="401"/>
    </location>
</feature>
<feature type="binding site" evidence="1">
    <location>
        <position position="27"/>
    </location>
    <ligand>
        <name>substrate</name>
    </ligand>
</feature>
<feature type="binding site" evidence="1">
    <location>
        <position position="113"/>
    </location>
    <ligand>
        <name>substrate</name>
    </ligand>
</feature>
<feature type="binding site" evidence="1">
    <location>
        <begin position="248"/>
        <end position="249"/>
    </location>
    <ligand>
        <name>substrate</name>
    </ligand>
</feature>
<feature type="binding site" evidence="1">
    <location>
        <position position="248"/>
    </location>
    <ligand>
        <name>Mn(2+)</name>
        <dbReference type="ChEBI" id="CHEBI:29035"/>
        <note>catalytic</note>
    </ligand>
</feature>
<feature type="binding site" evidence="1">
    <location>
        <position position="249"/>
    </location>
    <ligand>
        <name>Mn(2+)</name>
        <dbReference type="ChEBI" id="CHEBI:29035"/>
        <note>catalytic</note>
    </ligand>
</feature>
<feature type="binding site" evidence="1">
    <location>
        <position position="286"/>
    </location>
    <ligand>
        <name>Mn(2+)</name>
        <dbReference type="ChEBI" id="CHEBI:29035"/>
        <note>catalytic</note>
    </ligand>
</feature>
<feature type="binding site" evidence="1">
    <location>
        <begin position="363"/>
        <end position="367"/>
    </location>
    <ligand>
        <name>substrate</name>
    </ligand>
</feature>
<feature type="binding site" evidence="1">
    <location>
        <position position="401"/>
    </location>
    <ligand>
        <name>substrate</name>
    </ligand>
</feature>
<feature type="helix" evidence="5">
    <location>
        <begin position="19"/>
        <end position="25"/>
    </location>
</feature>
<feature type="helix" evidence="5">
    <location>
        <begin position="27"/>
        <end position="47"/>
    </location>
</feature>
<feature type="helix" evidence="5">
    <location>
        <begin position="54"/>
        <end position="74"/>
    </location>
</feature>
<feature type="strand" evidence="4">
    <location>
        <begin position="84"/>
        <end position="86"/>
    </location>
</feature>
<feature type="helix" evidence="5">
    <location>
        <begin position="87"/>
        <end position="98"/>
    </location>
</feature>
<feature type="strand" evidence="5">
    <location>
        <begin position="99"/>
        <end position="101"/>
    </location>
</feature>
<feature type="strand" evidence="5">
    <location>
        <begin position="106"/>
        <end position="108"/>
    </location>
</feature>
<feature type="helix" evidence="5">
    <location>
        <begin position="109"/>
        <end position="125"/>
    </location>
</feature>
<feature type="turn" evidence="5">
    <location>
        <begin position="128"/>
        <end position="132"/>
    </location>
</feature>
<feature type="helix" evidence="5">
    <location>
        <begin position="137"/>
        <end position="146"/>
    </location>
</feature>
<feature type="helix" evidence="5">
    <location>
        <begin position="148"/>
        <end position="159"/>
    </location>
</feature>
<feature type="helix" evidence="5">
    <location>
        <begin position="161"/>
        <end position="171"/>
    </location>
</feature>
<feature type="helix" evidence="5">
    <location>
        <begin position="174"/>
        <end position="191"/>
    </location>
</feature>
<feature type="helix" evidence="5">
    <location>
        <begin position="196"/>
        <end position="200"/>
    </location>
</feature>
<feature type="helix" evidence="5">
    <location>
        <begin position="204"/>
        <end position="207"/>
    </location>
</feature>
<feature type="helix" evidence="5">
    <location>
        <begin position="208"/>
        <end position="210"/>
    </location>
</feature>
<feature type="helix" evidence="5">
    <location>
        <begin position="213"/>
        <end position="218"/>
    </location>
</feature>
<feature type="helix" evidence="5">
    <location>
        <begin position="220"/>
        <end position="222"/>
    </location>
</feature>
<feature type="strand" evidence="5">
    <location>
        <begin position="223"/>
        <end position="226"/>
    </location>
</feature>
<feature type="helix" evidence="5">
    <location>
        <begin position="228"/>
        <end position="235"/>
    </location>
</feature>
<feature type="strand" evidence="5">
    <location>
        <begin position="240"/>
        <end position="246"/>
    </location>
</feature>
<feature type="helix" evidence="5">
    <location>
        <begin position="252"/>
        <end position="266"/>
    </location>
</feature>
<feature type="strand" evidence="5">
    <location>
        <begin position="269"/>
        <end position="276"/>
    </location>
</feature>
<feature type="turn" evidence="5">
    <location>
        <begin position="283"/>
        <end position="285"/>
    </location>
</feature>
<feature type="helix" evidence="5">
    <location>
        <begin position="289"/>
        <end position="302"/>
    </location>
</feature>
<feature type="helix" evidence="5">
    <location>
        <begin position="306"/>
        <end position="320"/>
    </location>
</feature>
<feature type="strand" evidence="5">
    <location>
        <begin position="323"/>
        <end position="326"/>
    </location>
</feature>
<feature type="helix" evidence="5">
    <location>
        <begin position="330"/>
        <end position="333"/>
    </location>
</feature>
<feature type="helix" evidence="5">
    <location>
        <begin position="338"/>
        <end position="340"/>
    </location>
</feature>
<feature type="helix" evidence="5">
    <location>
        <begin position="341"/>
        <end position="344"/>
    </location>
</feature>
<feature type="helix" evidence="5">
    <location>
        <begin position="346"/>
        <end position="352"/>
    </location>
</feature>
<feature type="strand" evidence="5">
    <location>
        <begin position="356"/>
        <end position="361"/>
    </location>
</feature>
<feature type="helix" evidence="5">
    <location>
        <begin position="362"/>
        <end position="370"/>
    </location>
</feature>
<feature type="helix" evidence="5">
    <location>
        <begin position="381"/>
        <end position="384"/>
    </location>
</feature>
<feature type="helix" evidence="5">
    <location>
        <begin position="386"/>
        <end position="388"/>
    </location>
</feature>
<feature type="turn" evidence="5">
    <location>
        <begin position="389"/>
        <end position="391"/>
    </location>
</feature>
<feature type="strand" evidence="5">
    <location>
        <begin position="394"/>
        <end position="399"/>
    </location>
</feature>
<feature type="helix" evidence="5">
    <location>
        <begin position="412"/>
        <end position="419"/>
    </location>
</feature>
<feature type="helix" evidence="5">
    <location>
        <begin position="423"/>
        <end position="425"/>
    </location>
</feature>
<feature type="strand" evidence="5">
    <location>
        <begin position="430"/>
        <end position="435"/>
    </location>
</feature>
<comment type="function">
    <text evidence="1">Metal-dependent phosphatase that shows phosphatase activity against several substrates, including fructose-1-phosphate and fructose-6-phosphate (By similarity). Its preference for fructose-1-phosphate, a strong glycating agent that causes DNA damage rather than a canonical yeast metabolite, suggests a damage-control function in hexose phosphate metabolism (By similarity).</text>
</comment>
<comment type="catalytic activity">
    <reaction evidence="1">
        <text>beta-D-fructose 1-phosphate + H2O = D-fructose + phosphate</text>
        <dbReference type="Rhea" id="RHEA:35603"/>
        <dbReference type="ChEBI" id="CHEBI:15377"/>
        <dbReference type="ChEBI" id="CHEBI:37721"/>
        <dbReference type="ChEBI" id="CHEBI:43474"/>
        <dbReference type="ChEBI" id="CHEBI:138881"/>
    </reaction>
</comment>
<comment type="catalytic activity">
    <reaction evidence="1">
        <text>beta-D-fructose 6-phosphate = dihydroxyacetone + D-glyceraldehyde 3-phosphate</text>
        <dbReference type="Rhea" id="RHEA:28002"/>
        <dbReference type="ChEBI" id="CHEBI:16016"/>
        <dbReference type="ChEBI" id="CHEBI:57634"/>
        <dbReference type="ChEBI" id="CHEBI:59776"/>
    </reaction>
</comment>
<comment type="cofactor">
    <cofactor evidence="1">
        <name>Mn(2+)</name>
        <dbReference type="ChEBI" id="CHEBI:29035"/>
    </cofactor>
    <cofactor evidence="1">
        <name>Ni(2+)</name>
        <dbReference type="ChEBI" id="CHEBI:49786"/>
    </cofactor>
</comment>
<comment type="subcellular location">
    <subcellularLocation>
        <location evidence="2">Cytoplasm</location>
    </subcellularLocation>
    <subcellularLocation>
        <location evidence="2">Nucleus</location>
    </subcellularLocation>
</comment>
<comment type="domain">
    <text evidence="1">Subfamily III proteins have a conserved RTxK motif about 40-50 residues from the C-terminus; the threonine may be replaced by serine or cysteine.</text>
</comment>
<comment type="similarity">
    <text evidence="3">Belongs to the damage-control phosphatase family. Sugar phosphate phosphatase III subfamily.</text>
</comment>
<keyword id="KW-0002">3D-structure</keyword>
<keyword id="KW-0963">Cytoplasm</keyword>
<keyword id="KW-0378">Hydrolase</keyword>
<keyword id="KW-0460">Magnesium</keyword>
<keyword id="KW-0464">Manganese</keyword>
<keyword id="KW-0479">Metal-binding</keyword>
<keyword id="KW-0539">Nucleus</keyword>
<keyword id="KW-1185">Reference proteome</keyword>
<keyword id="KW-0949">S-adenosyl-L-methionine</keyword>
<reference key="1">
    <citation type="journal article" date="2002" name="Nature">
        <title>The genome sequence of Schizosaccharomyces pombe.</title>
        <authorList>
            <person name="Wood V."/>
            <person name="Gwilliam R."/>
            <person name="Rajandream M.A."/>
            <person name="Lyne M.H."/>
            <person name="Lyne R."/>
            <person name="Stewart A."/>
            <person name="Sgouros J.G."/>
            <person name="Peat N."/>
            <person name="Hayles J."/>
            <person name="Baker S.G."/>
            <person name="Basham D."/>
            <person name="Bowman S."/>
            <person name="Brooks K."/>
            <person name="Brown D."/>
            <person name="Brown S."/>
            <person name="Chillingworth T."/>
            <person name="Churcher C.M."/>
            <person name="Collins M."/>
            <person name="Connor R."/>
            <person name="Cronin A."/>
            <person name="Davis P."/>
            <person name="Feltwell T."/>
            <person name="Fraser A."/>
            <person name="Gentles S."/>
            <person name="Goble A."/>
            <person name="Hamlin N."/>
            <person name="Harris D.E."/>
            <person name="Hidalgo J."/>
            <person name="Hodgson G."/>
            <person name="Holroyd S."/>
            <person name="Hornsby T."/>
            <person name="Howarth S."/>
            <person name="Huckle E.J."/>
            <person name="Hunt S."/>
            <person name="Jagels K."/>
            <person name="James K.D."/>
            <person name="Jones L."/>
            <person name="Jones M."/>
            <person name="Leather S."/>
            <person name="McDonald S."/>
            <person name="McLean J."/>
            <person name="Mooney P."/>
            <person name="Moule S."/>
            <person name="Mungall K.L."/>
            <person name="Murphy L.D."/>
            <person name="Niblett D."/>
            <person name="Odell C."/>
            <person name="Oliver K."/>
            <person name="O'Neil S."/>
            <person name="Pearson D."/>
            <person name="Quail M.A."/>
            <person name="Rabbinowitsch E."/>
            <person name="Rutherford K.M."/>
            <person name="Rutter S."/>
            <person name="Saunders D."/>
            <person name="Seeger K."/>
            <person name="Sharp S."/>
            <person name="Skelton J."/>
            <person name="Simmonds M.N."/>
            <person name="Squares R."/>
            <person name="Squares S."/>
            <person name="Stevens K."/>
            <person name="Taylor K."/>
            <person name="Taylor R.G."/>
            <person name="Tivey A."/>
            <person name="Walsh S.V."/>
            <person name="Warren T."/>
            <person name="Whitehead S."/>
            <person name="Woodward J.R."/>
            <person name="Volckaert G."/>
            <person name="Aert R."/>
            <person name="Robben J."/>
            <person name="Grymonprez B."/>
            <person name="Weltjens I."/>
            <person name="Vanstreels E."/>
            <person name="Rieger M."/>
            <person name="Schaefer M."/>
            <person name="Mueller-Auer S."/>
            <person name="Gabel C."/>
            <person name="Fuchs M."/>
            <person name="Duesterhoeft A."/>
            <person name="Fritzc C."/>
            <person name="Holzer E."/>
            <person name="Moestl D."/>
            <person name="Hilbert H."/>
            <person name="Borzym K."/>
            <person name="Langer I."/>
            <person name="Beck A."/>
            <person name="Lehrach H."/>
            <person name="Reinhardt R."/>
            <person name="Pohl T.M."/>
            <person name="Eger P."/>
            <person name="Zimmermann W."/>
            <person name="Wedler H."/>
            <person name="Wambutt R."/>
            <person name="Purnelle B."/>
            <person name="Goffeau A."/>
            <person name="Cadieu E."/>
            <person name="Dreano S."/>
            <person name="Gloux S."/>
            <person name="Lelaure V."/>
            <person name="Mottier S."/>
            <person name="Galibert F."/>
            <person name="Aves S.J."/>
            <person name="Xiang Z."/>
            <person name="Hunt C."/>
            <person name="Moore K."/>
            <person name="Hurst S.M."/>
            <person name="Lucas M."/>
            <person name="Rochet M."/>
            <person name="Gaillardin C."/>
            <person name="Tallada V.A."/>
            <person name="Garzon A."/>
            <person name="Thode G."/>
            <person name="Daga R.R."/>
            <person name="Cruzado L."/>
            <person name="Jimenez J."/>
            <person name="Sanchez M."/>
            <person name="del Rey F."/>
            <person name="Benito J."/>
            <person name="Dominguez A."/>
            <person name="Revuelta J.L."/>
            <person name="Moreno S."/>
            <person name="Armstrong J."/>
            <person name="Forsburg S.L."/>
            <person name="Cerutti L."/>
            <person name="Lowe T."/>
            <person name="McCombie W.R."/>
            <person name="Paulsen I."/>
            <person name="Potashkin J."/>
            <person name="Shpakovski G.V."/>
            <person name="Ussery D."/>
            <person name="Barrell B.G."/>
            <person name="Nurse P."/>
        </authorList>
    </citation>
    <scope>NUCLEOTIDE SEQUENCE [LARGE SCALE GENOMIC DNA]</scope>
    <source>
        <strain>972 / ATCC 24843</strain>
    </source>
</reference>
<reference key="2">
    <citation type="journal article" date="2011" name="Science">
        <title>Comparative functional genomics of the fission yeasts.</title>
        <authorList>
            <person name="Rhind N."/>
            <person name="Chen Z."/>
            <person name="Yassour M."/>
            <person name="Thompson D.A."/>
            <person name="Haas B.J."/>
            <person name="Habib N."/>
            <person name="Wapinski I."/>
            <person name="Roy S."/>
            <person name="Lin M.F."/>
            <person name="Heiman D.I."/>
            <person name="Young S.K."/>
            <person name="Furuya K."/>
            <person name="Guo Y."/>
            <person name="Pidoux A."/>
            <person name="Chen H.M."/>
            <person name="Robbertse B."/>
            <person name="Goldberg J.M."/>
            <person name="Aoki K."/>
            <person name="Bayne E.H."/>
            <person name="Berlin A.M."/>
            <person name="Desjardins C.A."/>
            <person name="Dobbs E."/>
            <person name="Dukaj L."/>
            <person name="Fan L."/>
            <person name="FitzGerald M.G."/>
            <person name="French C."/>
            <person name="Gujja S."/>
            <person name="Hansen K."/>
            <person name="Keifenheim D."/>
            <person name="Levin J.Z."/>
            <person name="Mosher R.A."/>
            <person name="Mueller C.A."/>
            <person name="Pfiffner J."/>
            <person name="Priest M."/>
            <person name="Russ C."/>
            <person name="Smialowska A."/>
            <person name="Swoboda P."/>
            <person name="Sykes S.M."/>
            <person name="Vaughn M."/>
            <person name="Vengrova S."/>
            <person name="Yoder R."/>
            <person name="Zeng Q."/>
            <person name="Allshire R."/>
            <person name="Baulcombe D."/>
            <person name="Birren B.W."/>
            <person name="Brown W."/>
            <person name="Ekwall K."/>
            <person name="Kellis M."/>
            <person name="Leatherwood J."/>
            <person name="Levin H."/>
            <person name="Margalit H."/>
            <person name="Martienssen R."/>
            <person name="Nieduszynski C.A."/>
            <person name="Spatafora J.W."/>
            <person name="Friedman N."/>
            <person name="Dalgaard J.Z."/>
            <person name="Baumann P."/>
            <person name="Niki H."/>
            <person name="Regev A."/>
            <person name="Nusbaum C."/>
        </authorList>
    </citation>
    <scope>REVISION OF GENE MODEL</scope>
</reference>
<reference key="3">
    <citation type="journal article" date="2006" name="Nat. Biotechnol.">
        <title>ORFeome cloning and global analysis of protein localization in the fission yeast Schizosaccharomyces pombe.</title>
        <authorList>
            <person name="Matsuyama A."/>
            <person name="Arai R."/>
            <person name="Yashiroda Y."/>
            <person name="Shirai A."/>
            <person name="Kamata A."/>
            <person name="Sekido S."/>
            <person name="Kobayashi Y."/>
            <person name="Hashimoto A."/>
            <person name="Hamamoto M."/>
            <person name="Hiraoka Y."/>
            <person name="Horinouchi S."/>
            <person name="Yoshida M."/>
        </authorList>
    </citation>
    <scope>SUBCELLULAR LOCATION [LARGE SCALE ANALYSIS]</scope>
</reference>
<sequence>MKFLNPPFPYSMTSDPESFGHECFTRRWGIILTGIEKDVSERLSKLASTSKDSEVVAQGKPLLNDLEAFKSDIKNDRPLVPLEGEGQDIVEYNEELKQLDNASWGNAPWLYSECYYYRRISLIFARYSEWKAYDPFFQQKDSTLKSSRAAVEELAGRYCLLEEELNSIAKKGDSHIAYMVFVEMAQISLWGNATDLSLLTNLSYEELQNLQGQKVVEESQKNILVNDFPTVWSKLKDVHNGRIDFVLDNAGFELYVDLIFAAYLLKAGIAKEIVLHPKDFPWFVSDVLPYDIEYLLTNLDTIFPTESVTKFATDLRSFSAKGQLRLRTDPFWTTAHYFGRMPDFAAGLLTELEKSDMIFFKGDLNYRKLTGDCLWPRTTPFGKTLGPIANAINACALRTCKADVVVGLPDGLYEKIAKDLPHWERTGKYAVVEFCPKA</sequence>
<name>ART1A_SCHPO</name>
<dbReference type="EC" id="3.1.3.-" evidence="1"/>
<dbReference type="EMBL" id="CU329670">
    <property type="protein sequence ID" value="CAB55283.3"/>
    <property type="molecule type" value="Genomic_DNA"/>
</dbReference>
<dbReference type="PIR" id="T39096">
    <property type="entry name" value="T39096"/>
</dbReference>
<dbReference type="PDB" id="7T7K">
    <property type="method" value="X-ray"/>
    <property type="resolution" value="1.90 A"/>
    <property type="chains" value="A/B=1-438"/>
</dbReference>
<dbReference type="PDB" id="7T7O">
    <property type="method" value="X-ray"/>
    <property type="resolution" value="2.16 A"/>
    <property type="chains" value="A/B=1-438"/>
</dbReference>
<dbReference type="PDB" id="7U1V">
    <property type="method" value="X-ray"/>
    <property type="resolution" value="2.10 A"/>
    <property type="chains" value="A/B=1-438"/>
</dbReference>
<dbReference type="PDB" id="7U1X">
    <property type="method" value="X-ray"/>
    <property type="resolution" value="2.12 A"/>
    <property type="chains" value="A/B=1-438"/>
</dbReference>
<dbReference type="PDB" id="7U1Y">
    <property type="method" value="X-ray"/>
    <property type="resolution" value="1.81 A"/>
    <property type="chains" value="A=1-438"/>
</dbReference>
<dbReference type="PDBsum" id="7T7K"/>
<dbReference type="PDBsum" id="7T7O"/>
<dbReference type="PDBsum" id="7U1V"/>
<dbReference type="PDBsum" id="7U1X"/>
<dbReference type="PDBsum" id="7U1Y"/>
<dbReference type="SMR" id="Q9UT55"/>
<dbReference type="BioGRID" id="279510">
    <property type="interactions" value="6"/>
</dbReference>
<dbReference type="FunCoup" id="Q9UT55">
    <property type="interactions" value="138"/>
</dbReference>
<dbReference type="STRING" id="284812.Q9UT55"/>
<dbReference type="iPTMnet" id="Q9UT55"/>
<dbReference type="PaxDb" id="4896-SPAC806.04c.1"/>
<dbReference type="EnsemblFungi" id="SPAC806.04c.1">
    <property type="protein sequence ID" value="SPAC806.04c.1:pep"/>
    <property type="gene ID" value="SPAC806.04c"/>
</dbReference>
<dbReference type="KEGG" id="spo:2543077"/>
<dbReference type="PomBase" id="SPAC806.04c"/>
<dbReference type="VEuPathDB" id="FungiDB:SPAC806.04c"/>
<dbReference type="eggNOG" id="KOG3870">
    <property type="taxonomic scope" value="Eukaryota"/>
</dbReference>
<dbReference type="HOGENOM" id="CLU_030117_2_1_1"/>
<dbReference type="InParanoid" id="Q9UT55"/>
<dbReference type="OMA" id="FSTCWLY"/>
<dbReference type="PRO" id="PR:Q9UT55"/>
<dbReference type="Proteomes" id="UP000002485">
    <property type="component" value="Chromosome I"/>
</dbReference>
<dbReference type="GO" id="GO:0005829">
    <property type="term" value="C:cytosol"/>
    <property type="evidence" value="ECO:0007005"/>
    <property type="project" value="PomBase"/>
</dbReference>
<dbReference type="GO" id="GO:0005634">
    <property type="term" value="C:nucleus"/>
    <property type="evidence" value="ECO:0007005"/>
    <property type="project" value="PomBase"/>
</dbReference>
<dbReference type="GO" id="GO:0097023">
    <property type="term" value="F:fructose 6-phosphate aldolase activity"/>
    <property type="evidence" value="ECO:0007669"/>
    <property type="project" value="RHEA"/>
</dbReference>
<dbReference type="GO" id="GO:0103026">
    <property type="term" value="F:fructose-1-phosphatase activity"/>
    <property type="evidence" value="ECO:0007669"/>
    <property type="project" value="RHEA"/>
</dbReference>
<dbReference type="GO" id="GO:0004427">
    <property type="term" value="F:inorganic diphosphate phosphatase activity"/>
    <property type="evidence" value="ECO:0000314"/>
    <property type="project" value="PomBase"/>
</dbReference>
<dbReference type="GO" id="GO:0046872">
    <property type="term" value="F:metal ion binding"/>
    <property type="evidence" value="ECO:0000269"/>
    <property type="project" value="PomBase"/>
</dbReference>
<dbReference type="GO" id="GO:0016791">
    <property type="term" value="F:phosphatase activity"/>
    <property type="evidence" value="ECO:0000314"/>
    <property type="project" value="PomBase"/>
</dbReference>
<dbReference type="GO" id="GO:1990748">
    <property type="term" value="P:cellular detoxification"/>
    <property type="evidence" value="ECO:0000255"/>
    <property type="project" value="PomBase"/>
</dbReference>
<dbReference type="GO" id="GO:0006974">
    <property type="term" value="P:DNA damage response"/>
    <property type="evidence" value="ECO:0000318"/>
    <property type="project" value="GO_Central"/>
</dbReference>
<dbReference type="GO" id="GO:0030643">
    <property type="term" value="P:intracellular phosphate ion homeostasis"/>
    <property type="evidence" value="ECO:0000315"/>
    <property type="project" value="PomBase"/>
</dbReference>
<dbReference type="FunFam" id="3.40.50.10880:FF:000005">
    <property type="entry name" value="DUF89-domain-containing protein"/>
    <property type="match status" value="1"/>
</dbReference>
<dbReference type="Gene3D" id="1.20.930.60">
    <property type="match status" value="1"/>
</dbReference>
<dbReference type="Gene3D" id="3.40.50.10880">
    <property type="entry name" value="Uncharacterised protein PF01937, DUF89, domain 3"/>
    <property type="match status" value="1"/>
</dbReference>
<dbReference type="InterPro" id="IPR036075">
    <property type="entry name" value="ARMT-1-like_metal-bd_sf"/>
</dbReference>
<dbReference type="InterPro" id="IPR039763">
    <property type="entry name" value="ARMT1"/>
</dbReference>
<dbReference type="InterPro" id="IPR002791">
    <property type="entry name" value="ARMT1-like_metal-bd"/>
</dbReference>
<dbReference type="PANTHER" id="PTHR12260">
    <property type="entry name" value="DAMAGE-CONTROL PHOSPHATASE ARMT1"/>
    <property type="match status" value="1"/>
</dbReference>
<dbReference type="PANTHER" id="PTHR12260:SF6">
    <property type="entry name" value="DAMAGE-CONTROL PHOSPHATASE ARMT1"/>
    <property type="match status" value="1"/>
</dbReference>
<dbReference type="Pfam" id="PF01937">
    <property type="entry name" value="ARMT1-like_dom"/>
    <property type="match status" value="1"/>
</dbReference>
<dbReference type="SUPFAM" id="SSF111321">
    <property type="entry name" value="AF1104-like"/>
    <property type="match status" value="1"/>
</dbReference>